<comment type="function">
    <text evidence="1">Upon acetylcholine binding, the AChR responds by an extensive change in conformation that affects all subunits and leads to opening of an ion-conducting channel across the plasma membrane.</text>
</comment>
<comment type="catalytic activity">
    <reaction evidence="2">
        <text>K(+)(in) = K(+)(out)</text>
        <dbReference type="Rhea" id="RHEA:29463"/>
        <dbReference type="ChEBI" id="CHEBI:29103"/>
    </reaction>
</comment>
<comment type="catalytic activity">
    <reaction evidence="2">
        <text>Na(+)(in) = Na(+)(out)</text>
        <dbReference type="Rhea" id="RHEA:34963"/>
        <dbReference type="ChEBI" id="CHEBI:29101"/>
    </reaction>
</comment>
<comment type="subunit">
    <text evidence="3">Pentamer of two alpha chains, and one each of the beta, delta, and gamma chains.</text>
</comment>
<comment type="subcellular location">
    <subcellularLocation>
        <location evidence="1">Postsynaptic cell membrane</location>
        <topology evidence="4">Multi-pass membrane protein</topology>
    </subcellularLocation>
    <subcellularLocation>
        <location evidence="1">Cell membrane</location>
        <topology evidence="4">Multi-pass membrane protein</topology>
    </subcellularLocation>
</comment>
<comment type="similarity">
    <text evidence="7">Belongs to the ligand-gated ion channel (TC 1.A.9) family. Acetylcholine receptor (TC 1.A.9.1) subfamily. Alpha-1/CHRNA1 sub-subfamily.</text>
</comment>
<gene>
    <name type="primary">CHRNA1</name>
</gene>
<evidence type="ECO:0000250" key="1">
    <source>
        <dbReference type="UniProtKB" id="P02708"/>
    </source>
</evidence>
<evidence type="ECO:0000250" key="2">
    <source>
        <dbReference type="UniProtKB" id="P02709"/>
    </source>
</evidence>
<evidence type="ECO:0000250" key="3">
    <source>
        <dbReference type="UniProtKB" id="P02711"/>
    </source>
</evidence>
<evidence type="ECO:0000255" key="4"/>
<evidence type="ECO:0000269" key="5">
    <source>
    </source>
</evidence>
<evidence type="ECO:0000269" key="6">
    <source>
    </source>
</evidence>
<evidence type="ECO:0000305" key="7"/>
<evidence type="ECO:0007829" key="8">
    <source>
        <dbReference type="PDB" id="1DXZ"/>
    </source>
</evidence>
<evidence type="ECO:0007829" key="9">
    <source>
        <dbReference type="PDB" id="1LXG"/>
    </source>
</evidence>
<evidence type="ECO:0007829" key="10">
    <source>
        <dbReference type="PDB" id="7QKO"/>
    </source>
</evidence>
<evidence type="ECO:0007829" key="11">
    <source>
        <dbReference type="PDB" id="7QL5"/>
    </source>
</evidence>
<evidence type="ECO:0007829" key="12">
    <source>
        <dbReference type="PDB" id="7SMM"/>
    </source>
</evidence>
<evidence type="ECO:0007829" key="13">
    <source>
        <dbReference type="PDB" id="8F2S"/>
    </source>
</evidence>
<protein>
    <recommendedName>
        <fullName>Acetylcholine receptor subunit alpha</fullName>
    </recommendedName>
</protein>
<sequence>MILCSYWHVGLVLLLFSCCGLVLGSEHETRLVANLLENYNKVIRPVEHHTHFVDITVGLQLIQLISVDEVNQIVETNVRLRQQWIDVRLRWNPADYGGIKKIRLPSDDVWLPDLVLYNNADGDFAIVHMTKLLLDYTGKIMWTPPAIFKSYCEIIVTHFPFDQQNCTMKLGIWTYDGTKVSISPESDRPDLSTFMESGEWVMKDYRGWKHWVYYTCCPDTPYLDITYHFIMQRIPLYFVVNVIIPCLLFSFLTGLVFYLPTDSGEKMTLSISVLLSLTVFLLVIVELIPSTSSAVPLIGKYMLFTMIFVISSIIITVVVINTHHRSPSTHTMPQWVRKIFIDTIPNVMFFSTMKRASKEKQENKIFADDIDISDISGKQVTGEVIFQTPLIKNPDVKSAIEGVKYIAEHMKSDEESSNAAEEWKYVAMVIDHILLCVFMLICIIGTVSVFAGRLIELSQEG</sequence>
<name>ACHA_TETCF</name>
<proteinExistence type="evidence at protein level"/>
<dbReference type="EMBL" id="J00963">
    <property type="protein sequence ID" value="AAA96705.1"/>
    <property type="molecule type" value="mRNA"/>
</dbReference>
<dbReference type="PIR" id="A03170">
    <property type="entry name" value="ACRYA1"/>
</dbReference>
<dbReference type="PDB" id="1ABT">
    <property type="method" value="NMR"/>
    <property type="chains" value="B=209-220"/>
</dbReference>
<dbReference type="PDB" id="1DXZ">
    <property type="method" value="NMR"/>
    <property type="chains" value="A=260-291"/>
</dbReference>
<dbReference type="PDB" id="1IDG">
    <property type="method" value="NMR"/>
    <property type="chains" value="B=205-222"/>
</dbReference>
<dbReference type="PDB" id="1IDH">
    <property type="method" value="NMR"/>
    <property type="chains" value="B=205-222"/>
</dbReference>
<dbReference type="PDB" id="1LXG">
    <property type="method" value="NMR"/>
    <property type="chains" value="B=205-222"/>
</dbReference>
<dbReference type="PDB" id="1LXH">
    <property type="method" value="NMR"/>
    <property type="chains" value="B=205-222"/>
</dbReference>
<dbReference type="PDB" id="1TOR">
    <property type="method" value="NMR"/>
    <property type="chains" value="A=91-100"/>
</dbReference>
<dbReference type="PDB" id="1TOS">
    <property type="method" value="NMR"/>
    <property type="chains" value="A=91-99"/>
</dbReference>
<dbReference type="PDB" id="3MRA">
    <property type="method" value="NMR"/>
    <property type="chains" value="A=301-325"/>
</dbReference>
<dbReference type="PDB" id="6UWZ">
    <property type="method" value="EM"/>
    <property type="resolution" value="2.69 A"/>
    <property type="chains" value="A/D=25-461"/>
</dbReference>
<dbReference type="PDB" id="7QKO">
    <property type="method" value="EM"/>
    <property type="resolution" value="2.90 A"/>
    <property type="chains" value="A/D=25-461"/>
</dbReference>
<dbReference type="PDB" id="7QL5">
    <property type="method" value="EM"/>
    <property type="resolution" value="2.50 A"/>
    <property type="chains" value="A/D=25-461"/>
</dbReference>
<dbReference type="PDB" id="7QL6">
    <property type="method" value="EM"/>
    <property type="resolution" value="3.23 A"/>
    <property type="chains" value="A/D=25-461"/>
</dbReference>
<dbReference type="PDB" id="7SMM">
    <property type="method" value="EM"/>
    <property type="resolution" value="2.50 A"/>
    <property type="chains" value="A/D=25-461"/>
</dbReference>
<dbReference type="PDB" id="7SMQ">
    <property type="method" value="EM"/>
    <property type="resolution" value="2.70 A"/>
    <property type="chains" value="A/D=25-461"/>
</dbReference>
<dbReference type="PDB" id="7SMR">
    <property type="method" value="EM"/>
    <property type="resolution" value="2.77 A"/>
    <property type="chains" value="A/D=25-461"/>
</dbReference>
<dbReference type="PDB" id="7SMS">
    <property type="method" value="EM"/>
    <property type="resolution" value="3.18 A"/>
    <property type="chains" value="A/D=25-461"/>
</dbReference>
<dbReference type="PDB" id="7SMT">
    <property type="method" value="EM"/>
    <property type="resolution" value="2.56 A"/>
    <property type="chains" value="A/D=25-461"/>
</dbReference>
<dbReference type="PDB" id="7Z14">
    <property type="method" value="EM"/>
    <property type="resolution" value="3.15 A"/>
    <property type="chains" value="A/D=25-461"/>
</dbReference>
<dbReference type="PDB" id="8ESK">
    <property type="method" value="EM"/>
    <property type="resolution" value="2.90 A"/>
    <property type="chains" value="A/D=25-461"/>
</dbReference>
<dbReference type="PDB" id="8F2S">
    <property type="method" value="EM"/>
    <property type="resolution" value="2.90 A"/>
    <property type="chains" value="A/D=25-457"/>
</dbReference>
<dbReference type="PDB" id="8F6Y">
    <property type="method" value="EM"/>
    <property type="resolution" value="2.79 A"/>
    <property type="chains" value="A/D=25-457"/>
</dbReference>
<dbReference type="PDB" id="8F6Z">
    <property type="method" value="EM"/>
    <property type="resolution" value="2.70 A"/>
    <property type="chains" value="A/D=25-457"/>
</dbReference>
<dbReference type="PDB" id="8QQM">
    <property type="method" value="EM"/>
    <property type="resolution" value="4.70 A"/>
    <property type="chains" value="A/D=25-461"/>
</dbReference>
<dbReference type="PDBsum" id="1ABT"/>
<dbReference type="PDBsum" id="1DXZ"/>
<dbReference type="PDBsum" id="1IDG"/>
<dbReference type="PDBsum" id="1IDH"/>
<dbReference type="PDBsum" id="1LXG"/>
<dbReference type="PDBsum" id="1LXH"/>
<dbReference type="PDBsum" id="1TOR"/>
<dbReference type="PDBsum" id="1TOS"/>
<dbReference type="PDBsum" id="3MRA"/>
<dbReference type="PDBsum" id="6UWZ"/>
<dbReference type="PDBsum" id="7QKO"/>
<dbReference type="PDBsum" id="7QL5"/>
<dbReference type="PDBsum" id="7QL6"/>
<dbReference type="PDBsum" id="7SMM"/>
<dbReference type="PDBsum" id="7SMQ"/>
<dbReference type="PDBsum" id="7SMR"/>
<dbReference type="PDBsum" id="7SMS"/>
<dbReference type="PDBsum" id="7SMT"/>
<dbReference type="PDBsum" id="7Z14"/>
<dbReference type="PDBsum" id="8ESK"/>
<dbReference type="PDBsum" id="8F2S"/>
<dbReference type="PDBsum" id="8F6Y"/>
<dbReference type="PDBsum" id="8F6Z"/>
<dbReference type="PDBsum" id="8QQM"/>
<dbReference type="EMDB" id="EMD-14048"/>
<dbReference type="EMDB" id="EMD-14064"/>
<dbReference type="EMDB" id="EMD-14065"/>
<dbReference type="EMDB" id="EMD-14440"/>
<dbReference type="EMDB" id="EMD-18596"/>
<dbReference type="EMDB" id="EMD-20928"/>
<dbReference type="EMDB" id="EMD-25202"/>
<dbReference type="EMDB" id="EMD-25205"/>
<dbReference type="EMDB" id="EMD-25206"/>
<dbReference type="EMDB" id="EMD-25207"/>
<dbReference type="EMDB" id="EMD-25208"/>
<dbReference type="EMDB" id="EMD-28576"/>
<dbReference type="EMDB" id="EMD-28826"/>
<dbReference type="EMDB" id="EMD-28892"/>
<dbReference type="EMDB" id="EMD-28893"/>
<dbReference type="SMR" id="P02710"/>
<dbReference type="ComplexPortal" id="CPX-2187">
    <property type="entry name" value="Acetylcholine receptor, alpha1-beta1-gamma-delta"/>
</dbReference>
<dbReference type="IntAct" id="P02710">
    <property type="interactions" value="3"/>
</dbReference>
<dbReference type="BindingDB" id="P02710"/>
<dbReference type="ChEMBL" id="CHEMBL3097"/>
<dbReference type="DrugCentral" id="P02710"/>
<dbReference type="TCDB" id="1.A.9.1.9">
    <property type="family name" value="the neurotransmitter receptor, cys loop, ligand-gated ion channel (lic) family"/>
</dbReference>
<dbReference type="GlyConnect" id="7">
    <property type="glycosylation" value="35 N-Linked glycans"/>
</dbReference>
<dbReference type="GlyCosmos" id="P02710">
    <property type="glycosylation" value="1 site, 66 glycans"/>
</dbReference>
<dbReference type="iPTMnet" id="P02710"/>
<dbReference type="SwissPalm" id="P02710"/>
<dbReference type="EvolutionaryTrace" id="P02710"/>
<dbReference type="GO" id="GO:0045211">
    <property type="term" value="C:postsynaptic membrane"/>
    <property type="evidence" value="ECO:0007669"/>
    <property type="project" value="UniProtKB-SubCell"/>
</dbReference>
<dbReference type="GO" id="GO:0022848">
    <property type="term" value="F:acetylcholine-gated monoatomic cation-selective channel activity"/>
    <property type="evidence" value="ECO:0007669"/>
    <property type="project" value="InterPro"/>
</dbReference>
<dbReference type="GO" id="GO:0004888">
    <property type="term" value="F:transmembrane signaling receptor activity"/>
    <property type="evidence" value="ECO:0007669"/>
    <property type="project" value="InterPro"/>
</dbReference>
<dbReference type="CDD" id="cd19014">
    <property type="entry name" value="LGIC_ECD_nAChR_A1"/>
    <property type="match status" value="1"/>
</dbReference>
<dbReference type="CDD" id="cd19064">
    <property type="entry name" value="LGIC_TM_nAChR"/>
    <property type="match status" value="1"/>
</dbReference>
<dbReference type="FunFam" id="1.20.58.390:FF:000013">
    <property type="entry name" value="Putative acetylcholine receptor subunit alpha"/>
    <property type="match status" value="1"/>
</dbReference>
<dbReference type="FunFam" id="1.20.58.390:FF:000016">
    <property type="entry name" value="Putative acetylcholine receptor subunit alpha"/>
    <property type="match status" value="1"/>
</dbReference>
<dbReference type="FunFam" id="2.70.170.10:FF:000019">
    <property type="entry name" value="Putative acetylcholine receptor subunit alpha"/>
    <property type="match status" value="1"/>
</dbReference>
<dbReference type="Gene3D" id="2.70.170.10">
    <property type="entry name" value="Neurotransmitter-gated ion-channel ligand-binding domain"/>
    <property type="match status" value="1"/>
</dbReference>
<dbReference type="Gene3D" id="1.20.58.390">
    <property type="entry name" value="Neurotransmitter-gated ion-channel transmembrane domain"/>
    <property type="match status" value="2"/>
</dbReference>
<dbReference type="InterPro" id="IPR006202">
    <property type="entry name" value="Neur_chan_lig-bd"/>
</dbReference>
<dbReference type="InterPro" id="IPR036734">
    <property type="entry name" value="Neur_chan_lig-bd_sf"/>
</dbReference>
<dbReference type="InterPro" id="IPR006201">
    <property type="entry name" value="Neur_channel"/>
</dbReference>
<dbReference type="InterPro" id="IPR036719">
    <property type="entry name" value="Neuro-gated_channel_TM_sf"/>
</dbReference>
<dbReference type="InterPro" id="IPR038050">
    <property type="entry name" value="Neuro_actylchol_rec"/>
</dbReference>
<dbReference type="InterPro" id="IPR006029">
    <property type="entry name" value="Neurotrans-gated_channel_TM"/>
</dbReference>
<dbReference type="InterPro" id="IPR018000">
    <property type="entry name" value="Neurotransmitter_ion_chnl_CS"/>
</dbReference>
<dbReference type="InterPro" id="IPR002394">
    <property type="entry name" value="Nicotinic_acetylcholine_rcpt"/>
</dbReference>
<dbReference type="NCBIfam" id="TIGR00860">
    <property type="entry name" value="LIC"/>
    <property type="match status" value="1"/>
</dbReference>
<dbReference type="PANTHER" id="PTHR18945">
    <property type="entry name" value="NEUROTRANSMITTER GATED ION CHANNEL"/>
    <property type="match status" value="1"/>
</dbReference>
<dbReference type="Pfam" id="PF02931">
    <property type="entry name" value="Neur_chan_LBD"/>
    <property type="match status" value="1"/>
</dbReference>
<dbReference type="Pfam" id="PF02932">
    <property type="entry name" value="Neur_chan_memb"/>
    <property type="match status" value="1"/>
</dbReference>
<dbReference type="PRINTS" id="PR00254">
    <property type="entry name" value="NICOTINICR"/>
</dbReference>
<dbReference type="PRINTS" id="PR00252">
    <property type="entry name" value="NRIONCHANNEL"/>
</dbReference>
<dbReference type="SUPFAM" id="SSF90112">
    <property type="entry name" value="Neurotransmitter-gated ion-channel transmembrane pore"/>
    <property type="match status" value="1"/>
</dbReference>
<dbReference type="SUPFAM" id="SSF63712">
    <property type="entry name" value="Nicotinic receptor ligand binding domain-like"/>
    <property type="match status" value="1"/>
</dbReference>
<dbReference type="PROSITE" id="PS00236">
    <property type="entry name" value="NEUROTR_ION_CHANNEL"/>
    <property type="match status" value="1"/>
</dbReference>
<reference key="1">
    <citation type="journal article" date="1982" name="Nature">
        <title>Primary structure of alpha-subunit precursor of Torpedo californica acetylcholine receptor deduced from cDNA sequence.</title>
        <authorList>
            <person name="Noda M."/>
            <person name="Takahashi H."/>
            <person name="Tanabe T."/>
            <person name="Toyosato M."/>
            <person name="Furutani Y."/>
            <person name="Hirose T."/>
            <person name="Asai M."/>
            <person name="Inayama S."/>
            <person name="Miyata T."/>
            <person name="Numa S."/>
        </authorList>
    </citation>
    <scope>NUCLEOTIDE SEQUENCE [MRNA]</scope>
</reference>
<reference key="2">
    <citation type="journal article" date="1984" name="Proc. Natl. Acad. Sci. U.S.A.">
        <title>Molecular weight and structural nonequivalence of the mature alpha subunits of Torpedo californica acetylcholine receptor.</title>
        <authorList>
            <person name="Conti-Tronconi B.M."/>
            <person name="Hunkapiller M.W."/>
            <person name="Raftery M.A."/>
        </authorList>
    </citation>
    <scope>PROTEIN SEQUENCE OF 25-127; 336-421 AND 429-450</scope>
    <scope>GLYCOSYLATION AT ASN-165</scope>
</reference>
<reference key="3">
    <citation type="journal article" date="1989" name="Biochemistry">
        <title>Proteolytic fragments of the nicotinic acetylcholine receptor identified by mass spectrometry: implications for receptor topography.</title>
        <authorList>
            <person name="Moore C.R."/>
            <person name="Yates J.R. III"/>
            <person name="Griffin P.R."/>
            <person name="Shabanowitz J."/>
            <person name="Martino P.A."/>
            <person name="Hunt D.F."/>
            <person name="Cafiso D.S."/>
        </authorList>
    </citation>
    <scope>PROTEIN SEQUENCE OF 29-41; 82-88; 132-149; 338-354 AND 363-411</scope>
</reference>
<reference key="4">
    <citation type="journal article" date="1991" name="J. Biol. Chem.">
        <title>Structure of the agonist-binding site of the nicotinic acetylcholine receptor. [3H]acetylcholine mustard identifies residues in the cation-binding subsite.</title>
        <authorList>
            <person name="Cohen J.B."/>
            <person name="Sharp S.D."/>
            <person name="Liu W.S."/>
        </authorList>
    </citation>
    <scope>PROTEIN SEQUENCE OF 104-131</scope>
</reference>
<reference key="5">
    <citation type="journal article" date="1994" name="Biochemistry">
        <title>Identifying the lipid-protein interface of the Torpedo nicotinic acetylcholine receptor: secondary structure implications.</title>
        <authorList>
            <person name="Blanton M.P."/>
            <person name="Cohen J.B."/>
        </authorList>
    </citation>
    <scope>PROTEIN SEQUENCE OF 234-266; 287-319 AND 423-453</scope>
</reference>
<reference key="6">
    <citation type="journal article" date="1989" name="Biochemistry">
        <title>Assessment of the number of free cysteines and isolation and identification of cystine-containing peptides from acetylcholine receptor.</title>
        <authorList>
            <person name="Kellaris K.V."/>
            <person name="Ware D.K."/>
            <person name="Smith S."/>
            <person name="Kyte J."/>
        </authorList>
    </citation>
    <scope>PROTEIN SEQUENCE OF 126-145 AND 192-198</scope>
    <scope>GLYCOSYLATION AT ASN-165</scope>
    <scope>DISULFIDE BOND</scope>
</reference>
<reference key="7">
    <citation type="journal article" date="1986" name="J. Biol. Chem.">
        <title>Acetylcholine receptor binding site contains a disulfide cross-link between adjacent half-cystinyl residues.</title>
        <authorList>
            <person name="Kao P.N."/>
            <person name="Karlin A."/>
        </authorList>
    </citation>
    <scope>DISULFIDE BONDS</scope>
</reference>
<reference key="8">
    <citation type="journal article" date="1993" name="Biochemistry">
        <title>NMR solution structure of an alpha-bungarotoxin/nicotinic receptor peptide complex.</title>
        <authorList>
            <person name="Basus V.J."/>
            <person name="Song G."/>
            <person name="Hawrot E."/>
        </authorList>
    </citation>
    <scope>STRUCTURE BY NMR OF 209-220</scope>
</reference>
<reference key="9">
    <citation type="journal article" date="1996" name="Biopolymers">
        <title>Compared structures of the free nicotinic acetylcholine receptor main immunogenic region (MIR) decapeptide and the antibody-bound [A76]MIR analogue: a molecular dynamics simulation from two-dimensional NMR data.</title>
        <authorList>
            <person name="Orlewski P."/>
            <person name="Marraud M."/>
            <person name="Cung M.T."/>
            <person name="Tsikaris V."/>
            <person name="Sakarellos-Daitsiotis M."/>
            <person name="Sakarellos C."/>
            <person name="Vatzaki E."/>
            <person name="Tzartos S.J."/>
        </authorList>
    </citation>
    <scope>STRUCTURE BY NMR OF 91-100</scope>
</reference>
<keyword id="KW-0002">3D-structure</keyword>
<keyword id="KW-1003">Cell membrane</keyword>
<keyword id="KW-0903">Direct protein sequencing</keyword>
<keyword id="KW-1015">Disulfide bond</keyword>
<keyword id="KW-0325">Glycoprotein</keyword>
<keyword id="KW-0407">Ion channel</keyword>
<keyword id="KW-0406">Ion transport</keyword>
<keyword id="KW-1071">Ligand-gated ion channel</keyword>
<keyword id="KW-0472">Membrane</keyword>
<keyword id="KW-0628">Postsynaptic cell membrane</keyword>
<keyword id="KW-0675">Receptor</keyword>
<keyword id="KW-0732">Signal</keyword>
<keyword id="KW-0770">Synapse</keyword>
<keyword id="KW-0812">Transmembrane</keyword>
<keyword id="KW-1133">Transmembrane helix</keyword>
<keyword id="KW-0813">Transport</keyword>
<accession>P02710</accession>
<feature type="signal peptide" evidence="6">
    <location>
        <begin position="1"/>
        <end position="24"/>
    </location>
</feature>
<feature type="chain" id="PRO_0000000310" description="Acetylcholine receptor subunit alpha">
    <location>
        <begin position="25"/>
        <end position="461"/>
    </location>
</feature>
<feature type="topological domain" description="Extracellular">
    <location>
        <begin position="25"/>
        <end position="234"/>
    </location>
</feature>
<feature type="transmembrane region" description="Helical">
    <location>
        <begin position="235"/>
        <end position="259"/>
    </location>
</feature>
<feature type="transmembrane region" description="Helical">
    <location>
        <begin position="267"/>
        <end position="285"/>
    </location>
</feature>
<feature type="transmembrane region" description="Helical">
    <location>
        <begin position="301"/>
        <end position="320"/>
    </location>
</feature>
<feature type="topological domain" description="Cytoplasmic">
    <location>
        <begin position="321"/>
        <end position="432"/>
    </location>
</feature>
<feature type="transmembrane region" description="Helical">
    <location>
        <begin position="433"/>
        <end position="451"/>
    </location>
</feature>
<feature type="glycosylation site" description="N-linked (GlcNAc...) asparagine" evidence="5 6">
    <location>
        <position position="165"/>
    </location>
</feature>
<feature type="disulfide bond">
    <location>
        <begin position="152"/>
        <end position="166"/>
    </location>
</feature>
<feature type="disulfide bond" description="Associated with receptor activation">
    <location>
        <begin position="216"/>
        <end position="217"/>
    </location>
</feature>
<feature type="helix" evidence="11">
    <location>
        <begin position="26"/>
        <end position="35"/>
    </location>
</feature>
<feature type="turn" evidence="12">
    <location>
        <begin position="36"/>
        <end position="38"/>
    </location>
</feature>
<feature type="strand" evidence="11">
    <location>
        <begin position="55"/>
        <end position="68"/>
    </location>
</feature>
<feature type="turn" evidence="11">
    <location>
        <begin position="69"/>
        <end position="72"/>
    </location>
</feature>
<feature type="strand" evidence="11">
    <location>
        <begin position="73"/>
        <end position="85"/>
    </location>
</feature>
<feature type="helix" evidence="11">
    <location>
        <begin position="87"/>
        <end position="89"/>
    </location>
</feature>
<feature type="helix" evidence="11">
    <location>
        <begin position="93"/>
        <end position="96"/>
    </location>
</feature>
<feature type="strand" evidence="11">
    <location>
        <begin position="101"/>
        <end position="105"/>
    </location>
</feature>
<feature type="helix" evidence="11">
    <location>
        <begin position="106"/>
        <end position="108"/>
    </location>
</feature>
<feature type="strand" evidence="12">
    <location>
        <begin position="114"/>
        <end position="116"/>
    </location>
</feature>
<feature type="strand" evidence="11">
    <location>
        <begin position="119"/>
        <end position="122"/>
    </location>
</feature>
<feature type="strand" evidence="11">
    <location>
        <begin position="131"/>
        <end position="135"/>
    </location>
</feature>
<feature type="strand" evidence="11">
    <location>
        <begin position="138"/>
        <end position="142"/>
    </location>
</feature>
<feature type="strand" evidence="11">
    <location>
        <begin position="145"/>
        <end position="151"/>
    </location>
</feature>
<feature type="turn" evidence="11">
    <location>
        <begin position="157"/>
        <end position="160"/>
    </location>
</feature>
<feature type="strand" evidence="11">
    <location>
        <begin position="163"/>
        <end position="171"/>
    </location>
</feature>
<feature type="strand" evidence="11">
    <location>
        <begin position="173"/>
        <end position="175"/>
    </location>
</feature>
<feature type="helix" evidence="11">
    <location>
        <begin position="177"/>
        <end position="180"/>
    </location>
</feature>
<feature type="strand" evidence="11">
    <location>
        <begin position="182"/>
        <end position="188"/>
    </location>
</feature>
<feature type="strand" evidence="11">
    <location>
        <begin position="198"/>
        <end position="212"/>
    </location>
</feature>
<feature type="strand" evidence="9">
    <location>
        <begin position="214"/>
        <end position="218"/>
    </location>
</feature>
<feature type="strand" evidence="11">
    <location>
        <begin position="222"/>
        <end position="233"/>
    </location>
</feature>
<feature type="helix" evidence="11">
    <location>
        <begin position="236"/>
        <end position="255"/>
    </location>
</feature>
<feature type="turn" evidence="11">
    <location>
        <begin position="256"/>
        <end position="258"/>
    </location>
</feature>
<feature type="helix" evidence="11">
    <location>
        <begin position="261"/>
        <end position="263"/>
    </location>
</feature>
<feature type="helix" evidence="11">
    <location>
        <begin position="266"/>
        <end position="285"/>
    </location>
</feature>
<feature type="turn" evidence="8">
    <location>
        <begin position="288"/>
        <end position="290"/>
    </location>
</feature>
<feature type="strand" evidence="13">
    <location>
        <begin position="292"/>
        <end position="294"/>
    </location>
</feature>
<feature type="helix" evidence="11">
    <location>
        <begin position="297"/>
        <end position="323"/>
    </location>
</feature>
<feature type="turn" evidence="11">
    <location>
        <begin position="327"/>
        <end position="329"/>
    </location>
</feature>
<feature type="helix" evidence="11">
    <location>
        <begin position="334"/>
        <end position="347"/>
    </location>
</feature>
<feature type="strand" evidence="10">
    <location>
        <begin position="349"/>
        <end position="351"/>
    </location>
</feature>
<feature type="helix" evidence="11">
    <location>
        <begin position="399"/>
        <end position="455"/>
    </location>
</feature>
<organism>
    <name type="scientific">Tetronarce californica</name>
    <name type="common">Pacific electric ray</name>
    <name type="synonym">Torpedo californica</name>
    <dbReference type="NCBI Taxonomy" id="7787"/>
    <lineage>
        <taxon>Eukaryota</taxon>
        <taxon>Metazoa</taxon>
        <taxon>Chordata</taxon>
        <taxon>Craniata</taxon>
        <taxon>Vertebrata</taxon>
        <taxon>Chondrichthyes</taxon>
        <taxon>Elasmobranchii</taxon>
        <taxon>Batoidea</taxon>
        <taxon>Torpediniformes</taxon>
        <taxon>Torpedinidae</taxon>
        <taxon>Tetronarce</taxon>
    </lineage>
</organism>